<comment type="function">
    <text evidence="1">May be involved in transcriptional regulation.</text>
</comment>
<comment type="interaction">
    <interactant intactId="EBI-11962574">
        <id>Q96EG3</id>
    </interactant>
    <interactant intactId="EBI-742750">
        <id>Q8TBE0</id>
        <label>BAHD1</label>
    </interactant>
    <organismsDiffer>false</organismsDiffer>
    <experiments>3</experiments>
</comment>
<comment type="interaction">
    <interactant intactId="EBI-11962574">
        <id>Q96EG3</id>
    </interactant>
    <interactant intactId="EBI-742722">
        <id>Q9BUH8</id>
        <label>BEGAIN</label>
    </interactant>
    <organismsDiffer>false</organismsDiffer>
    <experiments>3</experiments>
</comment>
<comment type="interaction">
    <interactant intactId="EBI-11962574">
        <id>Q96EG3</id>
    </interactant>
    <interactant intactId="EBI-3866279">
        <id>Q9BWT7</id>
        <label>CARD10</label>
    </interactant>
    <organismsDiffer>false</organismsDiffer>
    <experiments>3</experiments>
</comment>
<comment type="interaction">
    <interactant intactId="EBI-11962574">
        <id>Q96EG3</id>
    </interactant>
    <interactant intactId="EBI-744545">
        <id>Q8NEC5</id>
        <label>CATSPER1</label>
    </interactant>
    <organismsDiffer>false</organismsDiffer>
    <experiments>3</experiments>
</comment>
<comment type="interaction">
    <interactant intactId="EBI-11962574">
        <id>Q96EG3</id>
    </interactant>
    <interactant intactId="EBI-11977221">
        <id>Q86Z20</id>
        <label>CCDC125</label>
    </interactant>
    <organismsDiffer>false</organismsDiffer>
    <experiments>3</experiments>
</comment>
<comment type="interaction">
    <interactant intactId="EBI-11962574">
        <id>Q96EG3</id>
    </interactant>
    <interactant intactId="EBI-748961">
        <id>O95273</id>
        <label>CCNDBP1</label>
    </interactant>
    <organismsDiffer>false</organismsDiffer>
    <experiments>3</experiments>
</comment>
<comment type="interaction">
    <interactant intactId="EBI-11962574">
        <id>Q96EG3</id>
    </interactant>
    <interactant intactId="EBI-295634">
        <id>Q16543</id>
        <label>CDC37</label>
    </interactant>
    <organismsDiffer>false</organismsDiffer>
    <experiments>3</experiments>
</comment>
<comment type="interaction">
    <interactant intactId="EBI-11962574">
        <id>Q96EG3</id>
    </interactant>
    <interactant intactId="EBI-741528">
        <id>Q9UKJ5</id>
        <label>CHIC2</label>
    </interactant>
    <organismsDiffer>false</organismsDiffer>
    <experiments>3</experiments>
</comment>
<comment type="interaction">
    <interactant intactId="EBI-11962574">
        <id>Q96EG3</id>
    </interactant>
    <interactant intactId="EBI-750020">
        <id>P49760</id>
        <label>CLK2</label>
    </interactant>
    <organismsDiffer>false</organismsDiffer>
    <experiments>3</experiments>
</comment>
<comment type="interaction">
    <interactant intactId="EBI-11962574">
        <id>Q96EG3</id>
    </interactant>
    <interactant intactId="EBI-3867333">
        <id>A8MQ03</id>
        <label>CYSRT1</label>
    </interactant>
    <organismsDiffer>false</organismsDiffer>
    <experiments>3</experiments>
</comment>
<comment type="interaction">
    <interactant intactId="EBI-11962574">
        <id>Q96EG3</id>
    </interactant>
    <interactant intactId="EBI-1051531">
        <id>Q6P158</id>
        <label>DHX57</label>
    </interactant>
    <organismsDiffer>false</organismsDiffer>
    <experiments>3</experiments>
</comment>
<comment type="interaction">
    <interactant intactId="EBI-11962574">
        <id>Q96EG3</id>
    </interactant>
    <interactant intactId="EBI-739789">
        <id>Q92997</id>
        <label>DVL3</label>
    </interactant>
    <organismsDiffer>false</organismsDiffer>
    <experiments>3</experiments>
</comment>
<comment type="interaction">
    <interactant intactId="EBI-11962574">
        <id>Q96EG3</id>
    </interactant>
    <interactant intactId="EBI-743414">
        <id>O95967</id>
        <label>EFEMP2</label>
    </interactant>
    <organismsDiffer>false</organismsDiffer>
    <experiments>3</experiments>
</comment>
<comment type="interaction">
    <interactant intactId="EBI-11962574">
        <id>Q96EG3</id>
    </interactant>
    <interactant intactId="EBI-744366">
        <id>Q96KQ7</id>
        <label>EHMT2</label>
    </interactant>
    <organismsDiffer>false</organismsDiffer>
    <experiments>3</experiments>
</comment>
<comment type="interaction">
    <interactant intactId="EBI-11962574">
        <id>Q96EG3</id>
    </interactant>
    <interactant intactId="EBI-5661036">
        <id>A1L4K1</id>
        <label>FSD2</label>
    </interactant>
    <organismsDiffer>false</organismsDiffer>
    <experiments>3</experiments>
</comment>
<comment type="interaction">
    <interactant intactId="EBI-11962574">
        <id>Q96EG3</id>
    </interactant>
    <interactant intactId="EBI-5916454">
        <id>A6NEM1</id>
        <label>GOLGA6L9</label>
    </interactant>
    <organismsDiffer>false</organismsDiffer>
    <experiments>3</experiments>
</comment>
<comment type="interaction">
    <interactant intactId="EBI-11962574">
        <id>Q96EG3</id>
    </interactant>
    <interactant intactId="EBI-11959863">
        <id>Q9NWQ4-1</id>
        <label>GPATCH2L</label>
    </interactant>
    <organismsDiffer>false</organismsDiffer>
    <experiments>3</experiments>
</comment>
<comment type="interaction">
    <interactant intactId="EBI-11962574">
        <id>Q96EG3</id>
    </interactant>
    <interactant intactId="EBI-740785">
        <id>P49639</id>
        <label>HOXA1</label>
    </interactant>
    <organismsDiffer>false</organismsDiffer>
    <experiments>5</experiments>
</comment>
<comment type="interaction">
    <interactant intactId="EBI-11962574">
        <id>Q96EG3</id>
    </interactant>
    <interactant intactId="EBI-742808">
        <id>Q5VWX1</id>
        <label>KHDRBS2</label>
    </interactant>
    <organismsDiffer>false</organismsDiffer>
    <experiments>3</experiments>
</comment>
<comment type="interaction">
    <interactant intactId="EBI-11962574">
        <id>Q96EG3</id>
    </interactant>
    <interactant intactId="EBI-11959885">
        <id>Q07627</id>
        <label>KRTAP1-1</label>
    </interactant>
    <organismsDiffer>false</organismsDiffer>
    <experiments>3</experiments>
</comment>
<comment type="interaction">
    <interactant intactId="EBI-11962574">
        <id>Q96EG3</id>
    </interactant>
    <interactant intactId="EBI-11749135">
        <id>Q8IUG1</id>
        <label>KRTAP1-3</label>
    </interactant>
    <organismsDiffer>false</organismsDiffer>
    <experiments>3</experiments>
</comment>
<comment type="interaction">
    <interactant intactId="EBI-11962574">
        <id>Q96EG3</id>
    </interactant>
    <interactant intactId="EBI-10172290">
        <id>P60409</id>
        <label>KRTAP10-7</label>
    </interactant>
    <organismsDiffer>false</organismsDiffer>
    <experiments>3</experiments>
</comment>
<comment type="interaction">
    <interactant intactId="EBI-11962574">
        <id>Q96EG3</id>
    </interactant>
    <interactant intactId="EBI-10171774">
        <id>P60410</id>
        <label>KRTAP10-8</label>
    </interactant>
    <organismsDiffer>false</organismsDiffer>
    <experiments>3</experiments>
</comment>
<comment type="interaction">
    <interactant intactId="EBI-11962574">
        <id>Q96EG3</id>
    </interactant>
    <interactant intactId="EBI-10172052">
        <id>P60411</id>
        <label>KRTAP10-9</label>
    </interactant>
    <organismsDiffer>false</organismsDiffer>
    <experiments>3</experiments>
</comment>
<comment type="interaction">
    <interactant intactId="EBI-11962574">
        <id>Q96EG3</id>
    </interactant>
    <interactant intactId="EBI-11953334">
        <id>P60328</id>
        <label>KRTAP12-3</label>
    </interactant>
    <organismsDiffer>false</organismsDiffer>
    <experiments>3</experiments>
</comment>
<comment type="interaction">
    <interactant intactId="EBI-11962574">
        <id>Q96EG3</id>
    </interactant>
    <interactant intactId="EBI-10302392">
        <id>Q9BYQ6</id>
        <label>KRTAP4-11</label>
    </interactant>
    <organismsDiffer>false</organismsDiffer>
    <experiments>3</experiments>
</comment>
<comment type="interaction">
    <interactant intactId="EBI-11962574">
        <id>Q96EG3</id>
    </interactant>
    <interactant intactId="EBI-739863">
        <id>Q9BQ66</id>
        <label>KRTAP4-12</label>
    </interactant>
    <organismsDiffer>false</organismsDiffer>
    <experiments>3</experiments>
</comment>
<comment type="interaction">
    <interactant intactId="EBI-11962574">
        <id>Q96EG3</id>
    </interactant>
    <interactant intactId="EBI-11993254">
        <id>Q9BYR2</id>
        <label>KRTAP4-5</label>
    </interactant>
    <organismsDiffer>false</organismsDiffer>
    <experiments>3</experiments>
</comment>
<comment type="interaction">
    <interactant intactId="EBI-11962574">
        <id>Q96EG3</id>
    </interactant>
    <interactant intactId="EBI-3958099">
        <id>P26371</id>
        <label>KRTAP5-9</label>
    </interactant>
    <organismsDiffer>false</organismsDiffer>
    <experiments>3</experiments>
</comment>
<comment type="interaction">
    <interactant intactId="EBI-11962574">
        <id>Q96EG3</id>
    </interactant>
    <interactant intactId="EBI-724076">
        <id>Q99750</id>
        <label>MDFI</label>
    </interactant>
    <organismsDiffer>false</organismsDiffer>
    <experiments>3</experiments>
</comment>
<comment type="interaction">
    <interactant intactId="EBI-11962574">
        <id>Q96EG3</id>
    </interactant>
    <interactant intactId="EBI-11522433">
        <id>Q5JR59-3</id>
        <label>MTUS2</label>
    </interactant>
    <organismsDiffer>false</organismsDiffer>
    <experiments>3</experiments>
</comment>
<comment type="interaction">
    <interactant intactId="EBI-11962574">
        <id>Q96EG3</id>
    </interactant>
    <interactant intactId="EBI-7950783">
        <id>Q96JP2</id>
        <label>MYO15B</label>
    </interactant>
    <organismsDiffer>false</organismsDiffer>
    <experiments>3</experiments>
</comment>
<comment type="interaction">
    <interactant intactId="EBI-11962574">
        <id>Q96EG3</id>
    </interactant>
    <interactant intactId="EBI-22310682">
        <id>P0DPK4</id>
        <label>NOTCH2NLC</label>
    </interactant>
    <organismsDiffer>false</organismsDiffer>
    <experiments>3</experiments>
</comment>
<comment type="interaction">
    <interactant intactId="EBI-11962574">
        <id>Q96EG3</id>
    </interactant>
    <interactant intactId="EBI-11956269">
        <id>Q92824-2</id>
        <label>PCSK5</label>
    </interactant>
    <organismsDiffer>false</organismsDiffer>
    <experiments>3</experiments>
</comment>
<comment type="interaction">
    <interactant intactId="EBI-11962574">
        <id>Q96EG3</id>
    </interactant>
    <interactant intactId="EBI-2339674">
        <id>Q5T6S3</id>
        <label>PHF19</label>
    </interactant>
    <organismsDiffer>false</organismsDiffer>
    <experiments>3</experiments>
</comment>
<comment type="interaction">
    <interactant intactId="EBI-11962574">
        <id>Q96EG3</id>
    </interactant>
    <interactant intactId="EBI-10223258">
        <id>Q03181-2</id>
        <label>PPARD</label>
    </interactant>
    <organismsDiffer>false</organismsDiffer>
    <experiments>3</experiments>
</comment>
<comment type="interaction">
    <interactant intactId="EBI-11962574">
        <id>Q96EG3</id>
    </interactant>
    <interactant intactId="EBI-5235692">
        <id>O75864</id>
        <label>PPP1R37</label>
    </interactant>
    <organismsDiffer>false</organismsDiffer>
    <experiments>3</experiments>
</comment>
<comment type="interaction">
    <interactant intactId="EBI-11962574">
        <id>Q96EG3</id>
    </interactant>
    <interactant intactId="EBI-1567797">
        <id>Q8WWY3</id>
        <label>PRPF31</label>
    </interactant>
    <organismsDiffer>false</organismsDiffer>
    <experiments>3</experiments>
</comment>
<comment type="interaction">
    <interactant intactId="EBI-11962574">
        <id>Q96EG3</id>
    </interactant>
    <interactant intactId="EBI-8642021">
        <id>Q15415</id>
        <label>RBMY1J</label>
    </interactant>
    <organismsDiffer>false</organismsDiffer>
    <experiments>3</experiments>
</comment>
<comment type="interaction">
    <interactant intactId="EBI-11962574">
        <id>Q96EG3</id>
    </interactant>
    <interactant intactId="EBI-12009390">
        <id>Q6UXX9-2</id>
        <label>RSPO2</label>
    </interactant>
    <organismsDiffer>false</organismsDiffer>
    <experiments>3</experiments>
</comment>
<comment type="interaction">
    <interactant intactId="EBI-11962574">
        <id>Q96EG3</id>
    </interactant>
    <interactant intactId="EBI-7082156">
        <id>Q7Z698</id>
        <label>SPRED2</label>
    </interactant>
    <organismsDiffer>false</organismsDiffer>
    <experiments>6</experiments>
</comment>
<comment type="interaction">
    <interactant intactId="EBI-11962574">
        <id>Q96EG3</id>
    </interactant>
    <interactant intactId="EBI-3866665">
        <id>O43609</id>
        <label>SPRY1</label>
    </interactant>
    <organismsDiffer>false</organismsDiffer>
    <experiments>3</experiments>
</comment>
<comment type="interaction">
    <interactant intactId="EBI-11962574">
        <id>Q96EG3</id>
    </interactant>
    <interactant intactId="EBI-11955057">
        <id>Q8N8B7-2</id>
        <label>TCEANC</label>
    </interactant>
    <organismsDiffer>false</organismsDiffer>
    <experiments>3</experiments>
</comment>
<comment type="interaction">
    <interactant intactId="EBI-11962574">
        <id>Q96EG3</id>
    </interactant>
    <interactant intactId="EBI-949753">
        <id>Q63HR2</id>
        <label>TNS2</label>
    </interactant>
    <organismsDiffer>false</organismsDiffer>
    <experiments>3</experiments>
</comment>
<comment type="interaction">
    <interactant intactId="EBI-11962574">
        <id>Q96EG3</id>
    </interactant>
    <interactant intactId="EBI-725997">
        <id>Q8WV44</id>
        <label>TRIM41</label>
    </interactant>
    <organismsDiffer>false</organismsDiffer>
    <experiments>3</experiments>
</comment>
<comment type="interaction">
    <interactant intactId="EBI-11962574">
        <id>Q96EG3</id>
    </interactant>
    <interactant intactId="EBI-2515774">
        <id>Q8IZ69</id>
        <label>TRMT2A</label>
    </interactant>
    <organismsDiffer>false</organismsDiffer>
    <experiments>3</experiments>
</comment>
<comment type="interaction">
    <interactant intactId="EBI-11962574">
        <id>Q96EG3</id>
    </interactant>
    <interactant intactId="EBI-10180829">
        <id>Q7KZS0</id>
        <label>UBE2I</label>
    </interactant>
    <organismsDiffer>false</organismsDiffer>
    <experiments>3</experiments>
</comment>
<comment type="interaction">
    <interactant intactId="EBI-11962574">
        <id>Q96EG3</id>
    </interactant>
    <interactant intactId="EBI-10249550">
        <id>Q6EMK4</id>
        <label>VASN</label>
    </interactant>
    <organismsDiffer>false</organismsDiffer>
    <experiments>3</experiments>
</comment>
<comment type="interaction">
    <interactant intactId="EBI-11962574">
        <id>Q96EG3</id>
    </interactant>
    <interactant intactId="EBI-11957238">
        <id>Q2TAL6</id>
        <label>VWC2</label>
    </interactant>
    <organismsDiffer>false</organismsDiffer>
    <experiments>3</experiments>
</comment>
<comment type="interaction">
    <interactant intactId="EBI-11962574">
        <id>Q96EG3</id>
    </interactant>
    <interactant intactId="EBI-744471">
        <id>O43167</id>
        <label>ZBTB24</label>
    </interactant>
    <organismsDiffer>false</organismsDiffer>
    <experiments>3</experiments>
</comment>
<comment type="interaction">
    <interactant intactId="EBI-11962574">
        <id>Q96EG3</id>
    </interactant>
    <interactant intactId="EBI-744864">
        <id>P10074</id>
        <label>ZBTB48</label>
    </interactant>
    <organismsDiffer>false</organismsDiffer>
    <experiments>3</experiments>
</comment>
<comment type="interaction">
    <interactant intactId="EBI-11962574">
        <id>Q96EG3</id>
    </interactant>
    <interactant intactId="EBI-742740">
        <id>Q96BR9</id>
        <label>ZBTB8A</label>
    </interactant>
    <organismsDiffer>false</organismsDiffer>
    <experiments>3</experiments>
</comment>
<comment type="interaction">
    <interactant intactId="EBI-11962574">
        <id>Q96EG3</id>
    </interactant>
    <interactant intactId="EBI-1228269">
        <id>P58317</id>
        <label>ZNF121</label>
    </interactant>
    <organismsDiffer>false</organismsDiffer>
    <experiments>3</experiments>
</comment>
<comment type="interaction">
    <interactant intactId="EBI-11962574">
        <id>Q96EG3</id>
    </interactant>
    <interactant intactId="EBI-2555767">
        <id>Q15973</id>
        <label>ZNF124</label>
    </interactant>
    <organismsDiffer>false</organismsDiffer>
    <experiments>6</experiments>
</comment>
<comment type="interaction">
    <interactant intactId="EBI-11962574">
        <id>Q96EG3</id>
    </interactant>
    <interactant intactId="EBI-741694">
        <id>P49910</id>
        <label>ZNF165</label>
    </interactant>
    <organismsDiffer>false</organismsDiffer>
    <experiments>3</experiments>
</comment>
<comment type="interaction">
    <interactant intactId="EBI-11962574">
        <id>Q96EG3</id>
    </interactant>
    <interactant intactId="EBI-1105334">
        <id>P17021</id>
        <label>ZNF17</label>
    </interactant>
    <organismsDiffer>false</organismsDiffer>
    <experiments>3</experiments>
</comment>
<comment type="interaction">
    <interactant intactId="EBI-11962574">
        <id>Q96EG3</id>
    </interactant>
    <interactant intactId="EBI-751960">
        <id>O95125</id>
        <label>ZNF202</label>
    </interactant>
    <organismsDiffer>false</organismsDiffer>
    <experiments>3</experiments>
</comment>
<comment type="interaction">
    <interactant intactId="EBI-11962574">
        <id>Q96EG3</id>
    </interactant>
    <interactant intactId="EBI-10177272">
        <id>P15622-3</id>
        <label>ZNF250</label>
    </interactant>
    <organismsDiffer>false</organismsDiffer>
    <experiments>3</experiments>
</comment>
<comment type="interaction">
    <interactant intactId="EBI-11962574">
        <id>Q96EG3</id>
    </interactant>
    <interactant intactId="EBI-17263125">
        <id>Q9NSD4</id>
        <label>ZNF275</label>
    </interactant>
    <organismsDiffer>false</organismsDiffer>
    <experiments>3</experiments>
</comment>
<comment type="interaction">
    <interactant intactId="EBI-11962574">
        <id>Q96EG3</id>
    </interactant>
    <interactant intactId="EBI-1210473">
        <id>Q96PQ6</id>
        <label>ZNF317</label>
    </interactant>
    <organismsDiffer>false</organismsDiffer>
    <experiments>3</experiments>
</comment>
<comment type="interaction">
    <interactant intactId="EBI-11962574">
        <id>Q96EG3</id>
    </interactant>
    <interactant intactId="EBI-373456">
        <id>Q9Y3S2</id>
        <label>ZNF330</label>
    </interactant>
    <organismsDiffer>false</organismsDiffer>
    <experiments>6</experiments>
</comment>
<comment type="interaction">
    <interactant intactId="EBI-11962574">
        <id>Q96EG3</id>
    </interactant>
    <interactant intactId="EBI-347633">
        <id>Q9H9D4</id>
        <label>ZNF408</label>
    </interactant>
    <organismsDiffer>false</organismsDiffer>
    <experiments>3</experiments>
</comment>
<comment type="interaction">
    <interactant intactId="EBI-11962574">
        <id>Q96EG3</id>
    </interactant>
    <interactant intactId="EBI-740727">
        <id>Q8TAU3</id>
        <label>ZNF417</label>
    </interactant>
    <organismsDiffer>false</organismsDiffer>
    <experiments>6</experiments>
</comment>
<comment type="interaction">
    <interactant intactId="EBI-11962574">
        <id>Q96EG3</id>
    </interactant>
    <interactant intactId="EBI-751409">
        <id>Q8WTR7</id>
        <label>ZNF473</label>
    </interactant>
    <organismsDiffer>false</organismsDiffer>
    <experiments>3</experiments>
</comment>
<comment type="interaction">
    <interactant intactId="EBI-11962574">
        <id>Q96EG3</id>
    </interactant>
    <interactant intactId="EBI-10486136">
        <id>Q6ZNH5</id>
        <label>ZNF497</label>
    </interactant>
    <organismsDiffer>false</organismsDiffer>
    <experiments>3</experiments>
</comment>
<comment type="interaction">
    <interactant intactId="EBI-11962574">
        <id>Q96EG3</id>
    </interactant>
    <interactant intactId="EBI-10283126">
        <id>Q96C55</id>
        <label>ZNF524</label>
    </interactant>
    <organismsDiffer>false</organismsDiffer>
    <experiments>3</experiments>
</comment>
<comment type="interaction">
    <interactant intactId="EBI-11962574">
        <id>Q96EG3</id>
    </interactant>
    <interactant intactId="EBI-11035148">
        <id>Q8TF50</id>
        <label>ZNF526</label>
    </interactant>
    <organismsDiffer>false</organismsDiffer>
    <experiments>3</experiments>
</comment>
<comment type="interaction">
    <interactant intactId="EBI-11962574">
        <id>Q96EG3</id>
    </interactant>
    <interactant intactId="EBI-2555731">
        <id>Q9H707</id>
        <label>ZNF552</label>
    </interactant>
    <organismsDiffer>false</organismsDiffer>
    <experiments>6</experiments>
</comment>
<comment type="interaction">
    <interactant intactId="EBI-11962574">
        <id>Q96EG3</id>
    </interactant>
    <interactant intactId="EBI-6427977">
        <id>Q96SQ5</id>
        <label>ZNF587</label>
    </interactant>
    <organismsDiffer>false</organismsDiffer>
    <experiments>3</experiments>
</comment>
<comment type="interaction">
    <interactant intactId="EBI-11962574">
        <id>Q96EG3</id>
    </interactant>
    <interactant intactId="EBI-947476">
        <id>Q9UID6</id>
        <label>ZNF639</label>
    </interactant>
    <organismsDiffer>false</organismsDiffer>
    <experiments>3</experiments>
</comment>
<comment type="interaction">
    <interactant intactId="EBI-11962574">
        <id>Q96EG3</id>
    </interactant>
    <interactant intactId="EBI-11985915">
        <id>Q5T619</id>
        <label>ZNF648</label>
    </interactant>
    <organismsDiffer>false</organismsDiffer>
    <experiments>3</experiments>
</comment>
<comment type="interaction">
    <interactant intactId="EBI-11962574">
        <id>Q96EG3</id>
    </interactant>
    <interactant intactId="EBI-625509">
        <id>Q8N720</id>
        <label>ZNF655</label>
    </interactant>
    <organismsDiffer>false</organismsDiffer>
    <experiments>3</experiments>
</comment>
<comment type="interaction">
    <interactant intactId="EBI-11962574">
        <id>Q96EG3</id>
    </interactant>
    <interactant intactId="EBI-745775">
        <id>Q96H86</id>
        <label>ZNF764</label>
    </interactant>
    <organismsDiffer>false</organismsDiffer>
    <experiments>3</experiments>
</comment>
<comment type="interaction">
    <interactant intactId="EBI-11962574">
        <id>Q96EG3</id>
    </interactant>
    <interactant intactId="EBI-10240849">
        <id>Q3KQV3</id>
        <label>ZNF792</label>
    </interactant>
    <organismsDiffer>false</organismsDiffer>
    <experiments>3</experiments>
</comment>
<comment type="interaction">
    <interactant intactId="EBI-11962574">
        <id>Q96EG3</id>
    </interactant>
    <interactant intactId="EBI-5667516">
        <id>Q9Y2P0</id>
        <label>ZNF835</label>
    </interactant>
    <organismsDiffer>false</organismsDiffer>
    <experiments>3</experiments>
</comment>
<comment type="interaction">
    <interactant intactId="EBI-11962574">
        <id>Q96EG3</id>
    </interactant>
    <interactant intactId="EBI-11962574">
        <id>Q96EG3</id>
        <label>ZNF837</label>
    </interactant>
    <organismsDiffer>false</organismsDiffer>
    <experiments>3</experiments>
</comment>
<comment type="interaction">
    <interactant intactId="EBI-11962574">
        <id>Q96EG3</id>
    </interactant>
    <interactant intactId="EBI-527853">
        <id>Q9UGI0</id>
        <label>ZRANB1</label>
    </interactant>
    <organismsDiffer>false</organismsDiffer>
    <experiments>3</experiments>
</comment>
<comment type="interaction">
    <interactant intactId="EBI-11962574">
        <id>Q96EG3</id>
    </interactant>
    <interactant intactId="EBI-10281938">
        <id>Q9Y5A6</id>
        <label>ZSCAN21</label>
    </interactant>
    <organismsDiffer>false</organismsDiffer>
    <experiments>3</experiments>
</comment>
<comment type="subcellular location">
    <subcellularLocation>
        <location evidence="4">Nucleus</location>
    </subcellularLocation>
</comment>
<comment type="similarity">
    <text evidence="4">Belongs to the krueppel C2H2-type zinc-finger protein family.</text>
</comment>
<reference key="1">
    <citation type="journal article" date="2004" name="Genome Res.">
        <title>The status, quality, and expansion of the NIH full-length cDNA project: the Mammalian Gene Collection (MGC).</title>
        <authorList>
            <consortium name="The MGC Project Team"/>
        </authorList>
    </citation>
    <scope>NUCLEOTIDE SEQUENCE [LARGE SCALE MRNA]</scope>
    <source>
        <tissue>B-cell</tissue>
    </source>
</reference>
<dbReference type="EMBL" id="BC012365">
    <property type="protein sequence ID" value="AAH12365.2"/>
    <property type="molecule type" value="mRNA"/>
</dbReference>
<dbReference type="CCDS" id="CCDS46216.1"/>
<dbReference type="RefSeq" id="NP_612475.1">
    <property type="nucleotide sequence ID" value="NM_138466.2"/>
</dbReference>
<dbReference type="RefSeq" id="XP_016881731.1">
    <property type="nucleotide sequence ID" value="XM_017026242.1"/>
</dbReference>
<dbReference type="SMR" id="Q96EG3"/>
<dbReference type="BioGRID" id="125504">
    <property type="interactions" value="79"/>
</dbReference>
<dbReference type="FunCoup" id="Q96EG3">
    <property type="interactions" value="7"/>
</dbReference>
<dbReference type="IntAct" id="Q96EG3">
    <property type="interactions" value="78"/>
</dbReference>
<dbReference type="STRING" id="9606.ENSP00000405699"/>
<dbReference type="GlyGen" id="Q96EG3">
    <property type="glycosylation" value="2 sites, 1 O-linked glycan (1 site)"/>
</dbReference>
<dbReference type="iPTMnet" id="Q96EG3"/>
<dbReference type="PhosphoSitePlus" id="Q96EG3"/>
<dbReference type="BioMuta" id="ZNF837"/>
<dbReference type="DMDM" id="121946273"/>
<dbReference type="jPOST" id="Q96EG3"/>
<dbReference type="MassIVE" id="Q96EG3"/>
<dbReference type="PaxDb" id="9606-ENSP00000405699"/>
<dbReference type="PeptideAtlas" id="Q96EG3"/>
<dbReference type="ProteomicsDB" id="76406"/>
<dbReference type="Antibodypedia" id="33337">
    <property type="antibodies" value="23 antibodies from 11 providers"/>
</dbReference>
<dbReference type="DNASU" id="116412"/>
<dbReference type="Ensembl" id="ENST00000427624.2">
    <property type="protein sequence ID" value="ENSP00000405699.1"/>
    <property type="gene ID" value="ENSG00000152475.7"/>
</dbReference>
<dbReference type="Ensembl" id="ENST00000597582.2">
    <property type="protein sequence ID" value="ENSP00000471478.1"/>
    <property type="gene ID" value="ENSG00000152475.7"/>
</dbReference>
<dbReference type="GeneID" id="116412"/>
<dbReference type="KEGG" id="hsa:116412"/>
<dbReference type="MANE-Select" id="ENST00000597582.2">
    <property type="protein sequence ID" value="ENSP00000471478.1"/>
    <property type="RefSeq nucleotide sequence ID" value="NM_138466.2"/>
    <property type="RefSeq protein sequence ID" value="NP_612475.1"/>
</dbReference>
<dbReference type="UCSC" id="uc002qsl.5">
    <property type="organism name" value="human"/>
</dbReference>
<dbReference type="AGR" id="HGNC:25164"/>
<dbReference type="CTD" id="116412"/>
<dbReference type="GeneCards" id="ZNF837"/>
<dbReference type="HGNC" id="HGNC:25164">
    <property type="gene designation" value="ZNF837"/>
</dbReference>
<dbReference type="HPA" id="ENSG00000152475">
    <property type="expression patterns" value="Low tissue specificity"/>
</dbReference>
<dbReference type="neXtProt" id="NX_Q96EG3"/>
<dbReference type="OpenTargets" id="ENSG00000152475"/>
<dbReference type="PharmGKB" id="PA162410789"/>
<dbReference type="VEuPathDB" id="HostDB:ENSG00000152475"/>
<dbReference type="eggNOG" id="KOG1721">
    <property type="taxonomic scope" value="Eukaryota"/>
</dbReference>
<dbReference type="GeneTree" id="ENSGT00940000165357"/>
<dbReference type="HOGENOM" id="CLU_002678_84_0_1"/>
<dbReference type="InParanoid" id="Q96EG3"/>
<dbReference type="OMA" id="CGDCSER"/>
<dbReference type="OrthoDB" id="8117402at2759"/>
<dbReference type="PAN-GO" id="Q96EG3">
    <property type="GO annotations" value="4 GO annotations based on evolutionary models"/>
</dbReference>
<dbReference type="PhylomeDB" id="Q96EG3"/>
<dbReference type="TreeFam" id="TF337005"/>
<dbReference type="PathwayCommons" id="Q96EG3"/>
<dbReference type="SignaLink" id="Q96EG3"/>
<dbReference type="BioGRID-ORCS" id="116412">
    <property type="hits" value="18 hits in 1174 CRISPR screens"/>
</dbReference>
<dbReference type="GenomeRNAi" id="116412"/>
<dbReference type="Pharos" id="Q96EG3">
    <property type="development level" value="Tdark"/>
</dbReference>
<dbReference type="PRO" id="PR:Q96EG3"/>
<dbReference type="Proteomes" id="UP000005640">
    <property type="component" value="Chromosome 19"/>
</dbReference>
<dbReference type="RNAct" id="Q96EG3">
    <property type="molecule type" value="protein"/>
</dbReference>
<dbReference type="Bgee" id="ENSG00000152475">
    <property type="expression patterns" value="Expressed in right uterine tube and 88 other cell types or tissues"/>
</dbReference>
<dbReference type="GO" id="GO:0005634">
    <property type="term" value="C:nucleus"/>
    <property type="evidence" value="ECO:0000318"/>
    <property type="project" value="GO_Central"/>
</dbReference>
<dbReference type="GO" id="GO:0000981">
    <property type="term" value="F:DNA-binding transcription factor activity, RNA polymerase II-specific"/>
    <property type="evidence" value="ECO:0000318"/>
    <property type="project" value="GO_Central"/>
</dbReference>
<dbReference type="GO" id="GO:0042802">
    <property type="term" value="F:identical protein binding"/>
    <property type="evidence" value="ECO:0000353"/>
    <property type="project" value="IntAct"/>
</dbReference>
<dbReference type="GO" id="GO:0000978">
    <property type="term" value="F:RNA polymerase II cis-regulatory region sequence-specific DNA binding"/>
    <property type="evidence" value="ECO:0000318"/>
    <property type="project" value="GO_Central"/>
</dbReference>
<dbReference type="GO" id="GO:0008270">
    <property type="term" value="F:zinc ion binding"/>
    <property type="evidence" value="ECO:0007669"/>
    <property type="project" value="UniProtKB-KW"/>
</dbReference>
<dbReference type="GO" id="GO:0006357">
    <property type="term" value="P:regulation of transcription by RNA polymerase II"/>
    <property type="evidence" value="ECO:0000318"/>
    <property type="project" value="GO_Central"/>
</dbReference>
<dbReference type="FunFam" id="3.30.160.60:FF:003095">
    <property type="match status" value="1"/>
</dbReference>
<dbReference type="FunFam" id="3.30.160.60:FF:000508">
    <property type="entry name" value="Myeloid zinc finger 1"/>
    <property type="match status" value="1"/>
</dbReference>
<dbReference type="FunFam" id="3.30.160.60:FF:000358">
    <property type="entry name" value="zinc finger protein 24"/>
    <property type="match status" value="1"/>
</dbReference>
<dbReference type="FunFam" id="3.30.160.60:FF:000224">
    <property type="entry name" value="Zinc finger protein 329"/>
    <property type="match status" value="1"/>
</dbReference>
<dbReference type="FunFam" id="3.30.160.60:FF:000384">
    <property type="entry name" value="Zinc finger protein 550"/>
    <property type="match status" value="1"/>
</dbReference>
<dbReference type="FunFam" id="3.30.160.60:FF:001207">
    <property type="entry name" value="zinc finger protein 837 isoform X2"/>
    <property type="match status" value="2"/>
</dbReference>
<dbReference type="FunFam" id="3.30.160.60:FF:002318">
    <property type="entry name" value="zinc finger protein 837 isoform X2"/>
    <property type="match status" value="1"/>
</dbReference>
<dbReference type="Gene3D" id="3.30.160.60">
    <property type="entry name" value="Classic Zinc Finger"/>
    <property type="match status" value="8"/>
</dbReference>
<dbReference type="InterPro" id="IPR036236">
    <property type="entry name" value="Znf_C2H2_sf"/>
</dbReference>
<dbReference type="InterPro" id="IPR013087">
    <property type="entry name" value="Znf_C2H2_type"/>
</dbReference>
<dbReference type="PANTHER" id="PTHR23226">
    <property type="entry name" value="ZINC FINGER AND SCAN DOMAIN-CONTAINING"/>
    <property type="match status" value="1"/>
</dbReference>
<dbReference type="PANTHER" id="PTHR23226:SF85">
    <property type="entry name" value="ZINC FINGER PROTEIN 397"/>
    <property type="match status" value="1"/>
</dbReference>
<dbReference type="Pfam" id="PF00096">
    <property type="entry name" value="zf-C2H2"/>
    <property type="match status" value="7"/>
</dbReference>
<dbReference type="SMART" id="SM00355">
    <property type="entry name" value="ZnF_C2H2"/>
    <property type="match status" value="8"/>
</dbReference>
<dbReference type="SUPFAM" id="SSF57667">
    <property type="entry name" value="beta-beta-alpha zinc fingers"/>
    <property type="match status" value="4"/>
</dbReference>
<dbReference type="PROSITE" id="PS00028">
    <property type="entry name" value="ZINC_FINGER_C2H2_1"/>
    <property type="match status" value="8"/>
</dbReference>
<dbReference type="PROSITE" id="PS50157">
    <property type="entry name" value="ZINC_FINGER_C2H2_2"/>
    <property type="match status" value="8"/>
</dbReference>
<accession>Q96EG3</accession>
<protein>
    <recommendedName>
        <fullName>Zinc finger protein 837</fullName>
    </recommendedName>
</protein>
<gene>
    <name type="primary">ZNF837</name>
</gene>
<proteinExistence type="evidence at protein level"/>
<organism>
    <name type="scientific">Homo sapiens</name>
    <name type="common">Human</name>
    <dbReference type="NCBI Taxonomy" id="9606"/>
    <lineage>
        <taxon>Eukaryota</taxon>
        <taxon>Metazoa</taxon>
        <taxon>Chordata</taxon>
        <taxon>Craniata</taxon>
        <taxon>Vertebrata</taxon>
        <taxon>Euteleostomi</taxon>
        <taxon>Mammalia</taxon>
        <taxon>Eutheria</taxon>
        <taxon>Euarchontoglires</taxon>
        <taxon>Primates</taxon>
        <taxon>Haplorrhini</taxon>
        <taxon>Catarrhini</taxon>
        <taxon>Hominidae</taxon>
        <taxon>Homo</taxon>
    </lineage>
</organism>
<sequence>MEAPAQKAGQGGLPKADAQGASGAREKRPEEPRPLEEDRAGSRPTQKGDLRGAAGGRTTPPGGGSRGCSLGVSPGPGTRHSAGTRPLVREPCGPTSSQNPELVIPEGLQAREGPCRSPARGGDCSRNSCLAWHRGAPAGETPPVCDPCPERIQNHPRTQLCEVHTDCWPCQPGTGAPTCPRTPKPTSRGRNPLVEQPRACACGEAFAWRALRIPQERLQATEEPRPCARCGKRFRPNQQQQAGKSPPVCPECGQTSRPRPIVPDPPAQRLYACDECGKAFTRTSSLLQHQRIHTGERPYECAECGKAFVRCSGLYRHQKTHSAERHRRGPVLARRAFRLGCPPCGDYSERSPRRGSGAGEKPYECADCAKAFGLFSHLVEHRRVHTGEKPYACPECGKAFNQRSNLSRHQRTHSSAKPYACPLCEKAFKGRSGLVQHQRAHTGERPYGCSECGKTFRGCSELRQHERLHSGEKPYICRDCGKAFVRNCSLVRHLRTHTGERPYACGDCGRAFSQRSNLNEHRKRHGGRAAP</sequence>
<evidence type="ECO:0000250" key="1"/>
<evidence type="ECO:0000255" key="2">
    <source>
        <dbReference type="PROSITE-ProRule" id="PRU00042"/>
    </source>
</evidence>
<evidence type="ECO:0000256" key="3">
    <source>
        <dbReference type="SAM" id="MobiDB-lite"/>
    </source>
</evidence>
<evidence type="ECO:0000305" key="4"/>
<keyword id="KW-0238">DNA-binding</keyword>
<keyword id="KW-0479">Metal-binding</keyword>
<keyword id="KW-0539">Nucleus</keyword>
<keyword id="KW-1267">Proteomics identification</keyword>
<keyword id="KW-1185">Reference proteome</keyword>
<keyword id="KW-0677">Repeat</keyword>
<keyword id="KW-0804">Transcription</keyword>
<keyword id="KW-0805">Transcription regulation</keyword>
<keyword id="KW-0862">Zinc</keyword>
<keyword id="KW-0863">Zinc-finger</keyword>
<feature type="chain" id="PRO_0000321906" description="Zinc finger protein 837">
    <location>
        <begin position="1"/>
        <end position="531"/>
    </location>
</feature>
<feature type="zinc finger region" description="C2H2-type 1" evidence="2">
    <location>
        <begin position="271"/>
        <end position="293"/>
    </location>
</feature>
<feature type="zinc finger region" description="C2H2-type 2" evidence="2">
    <location>
        <begin position="299"/>
        <end position="321"/>
    </location>
</feature>
<feature type="zinc finger region" description="C2H2-type 3" evidence="2">
    <location>
        <begin position="363"/>
        <end position="385"/>
    </location>
</feature>
<feature type="zinc finger region" description="C2H2-type 4" evidence="2">
    <location>
        <begin position="391"/>
        <end position="413"/>
    </location>
</feature>
<feature type="zinc finger region" description="C2H2-type 5" evidence="2">
    <location>
        <begin position="419"/>
        <end position="441"/>
    </location>
</feature>
<feature type="zinc finger region" description="C2H2-type 6" evidence="2">
    <location>
        <begin position="447"/>
        <end position="469"/>
    </location>
</feature>
<feature type="zinc finger region" description="C2H2-type 7" evidence="2">
    <location>
        <begin position="475"/>
        <end position="497"/>
    </location>
</feature>
<feature type="zinc finger region" description="C2H2-type 8" evidence="2">
    <location>
        <begin position="503"/>
        <end position="525"/>
    </location>
</feature>
<feature type="region of interest" description="Disordered" evidence="3">
    <location>
        <begin position="1"/>
        <end position="101"/>
    </location>
</feature>
<feature type="compositionally biased region" description="Basic and acidic residues" evidence="3">
    <location>
        <begin position="24"/>
        <end position="50"/>
    </location>
</feature>
<feature type="sequence variant" id="VAR_039373" description="In dbSNP:rs7256940.">
    <original>Q</original>
    <variation>R</variation>
    <location>
        <position position="153"/>
    </location>
</feature>
<feature type="sequence variant" id="VAR_061979" description="In dbSNP:rs7255596.">
    <original>A</original>
    <variation>T</variation>
    <location>
        <position position="242"/>
    </location>
</feature>
<name>ZN837_HUMAN</name>